<proteinExistence type="inferred from homology"/>
<comment type="function">
    <text evidence="1">One of the primary rRNA binding proteins, it binds directly near the 3'-end of the 23S rRNA, where it nucleates assembly of the 50S subunit.</text>
</comment>
<comment type="subunit">
    <text evidence="1">Part of the 50S ribosomal subunit. Forms a cluster with proteins L14 and L19.</text>
</comment>
<comment type="similarity">
    <text evidence="1">Belongs to the universal ribosomal protein uL3 family.</text>
</comment>
<accession>Q5FM90</accession>
<keyword id="KW-1185">Reference proteome</keyword>
<keyword id="KW-0687">Ribonucleoprotein</keyword>
<keyword id="KW-0689">Ribosomal protein</keyword>
<keyword id="KW-0694">RNA-binding</keyword>
<keyword id="KW-0699">rRNA-binding</keyword>
<organism>
    <name type="scientific">Lactobacillus acidophilus (strain ATCC 700396 / NCK56 / N2 / NCFM)</name>
    <dbReference type="NCBI Taxonomy" id="272621"/>
    <lineage>
        <taxon>Bacteria</taxon>
        <taxon>Bacillati</taxon>
        <taxon>Bacillota</taxon>
        <taxon>Bacilli</taxon>
        <taxon>Lactobacillales</taxon>
        <taxon>Lactobacillaceae</taxon>
        <taxon>Lactobacillus</taxon>
    </lineage>
</organism>
<gene>
    <name evidence="1" type="primary">rplC</name>
    <name type="ordered locus">LBA0291</name>
</gene>
<sequence>MTKGILGRKVGMTQIFTKDGILVPVTVVEATPNVVMQVKTVESDGYEAVQLGYQDKREVLSNKPEKGHADKAKTSPKRFIREIRGVELKDYEVGSEVTVDTFKEGDVVNVTGTSRGHGYQGNIKRWGQSRGPETHGSRYHRIPGSMGSIINRVPKGKRLPGHMGVKKVTIENLVIEKVVADKNVLMIKGNVPGAKNSLIVVKTASKAVKADK</sequence>
<dbReference type="EMBL" id="CP000033">
    <property type="protein sequence ID" value="AAV42184.1"/>
    <property type="molecule type" value="Genomic_DNA"/>
</dbReference>
<dbReference type="RefSeq" id="WP_003549024.1">
    <property type="nucleotide sequence ID" value="NC_006814.3"/>
</dbReference>
<dbReference type="RefSeq" id="YP_193215.1">
    <property type="nucleotide sequence ID" value="NC_006814.3"/>
</dbReference>
<dbReference type="SMR" id="Q5FM90"/>
<dbReference type="STRING" id="272621.LBA0291"/>
<dbReference type="GeneID" id="93290601"/>
<dbReference type="KEGG" id="lac:LBA0291"/>
<dbReference type="PATRIC" id="fig|272621.13.peg.276"/>
<dbReference type="eggNOG" id="COG0087">
    <property type="taxonomic scope" value="Bacteria"/>
</dbReference>
<dbReference type="HOGENOM" id="CLU_044142_4_1_9"/>
<dbReference type="OrthoDB" id="9806135at2"/>
<dbReference type="BioCyc" id="LACI272621:G1G49-285-MONOMER"/>
<dbReference type="Proteomes" id="UP000006381">
    <property type="component" value="Chromosome"/>
</dbReference>
<dbReference type="GO" id="GO:0022625">
    <property type="term" value="C:cytosolic large ribosomal subunit"/>
    <property type="evidence" value="ECO:0007669"/>
    <property type="project" value="TreeGrafter"/>
</dbReference>
<dbReference type="GO" id="GO:0019843">
    <property type="term" value="F:rRNA binding"/>
    <property type="evidence" value="ECO:0007669"/>
    <property type="project" value="UniProtKB-UniRule"/>
</dbReference>
<dbReference type="GO" id="GO:0003735">
    <property type="term" value="F:structural constituent of ribosome"/>
    <property type="evidence" value="ECO:0007669"/>
    <property type="project" value="InterPro"/>
</dbReference>
<dbReference type="GO" id="GO:0006412">
    <property type="term" value="P:translation"/>
    <property type="evidence" value="ECO:0007669"/>
    <property type="project" value="UniProtKB-UniRule"/>
</dbReference>
<dbReference type="FunFam" id="2.40.30.10:FF:000004">
    <property type="entry name" value="50S ribosomal protein L3"/>
    <property type="match status" value="1"/>
</dbReference>
<dbReference type="FunFam" id="3.30.160.810:FF:000002">
    <property type="entry name" value="50S ribosomal protein L3"/>
    <property type="match status" value="1"/>
</dbReference>
<dbReference type="Gene3D" id="3.30.160.810">
    <property type="match status" value="1"/>
</dbReference>
<dbReference type="Gene3D" id="2.40.30.10">
    <property type="entry name" value="Translation factors"/>
    <property type="match status" value="1"/>
</dbReference>
<dbReference type="HAMAP" id="MF_01325_B">
    <property type="entry name" value="Ribosomal_uL3_B"/>
    <property type="match status" value="1"/>
</dbReference>
<dbReference type="InterPro" id="IPR000597">
    <property type="entry name" value="Ribosomal_uL3"/>
</dbReference>
<dbReference type="InterPro" id="IPR019927">
    <property type="entry name" value="Ribosomal_uL3_bac/org-type"/>
</dbReference>
<dbReference type="InterPro" id="IPR019926">
    <property type="entry name" value="Ribosomal_uL3_CS"/>
</dbReference>
<dbReference type="InterPro" id="IPR009000">
    <property type="entry name" value="Transl_B-barrel_sf"/>
</dbReference>
<dbReference type="NCBIfam" id="TIGR03625">
    <property type="entry name" value="L3_bact"/>
    <property type="match status" value="1"/>
</dbReference>
<dbReference type="PANTHER" id="PTHR11229">
    <property type="entry name" value="50S RIBOSOMAL PROTEIN L3"/>
    <property type="match status" value="1"/>
</dbReference>
<dbReference type="PANTHER" id="PTHR11229:SF16">
    <property type="entry name" value="LARGE RIBOSOMAL SUBUNIT PROTEIN UL3C"/>
    <property type="match status" value="1"/>
</dbReference>
<dbReference type="Pfam" id="PF00297">
    <property type="entry name" value="Ribosomal_L3"/>
    <property type="match status" value="1"/>
</dbReference>
<dbReference type="SUPFAM" id="SSF50447">
    <property type="entry name" value="Translation proteins"/>
    <property type="match status" value="1"/>
</dbReference>
<dbReference type="PROSITE" id="PS00474">
    <property type="entry name" value="RIBOSOMAL_L3"/>
    <property type="match status" value="1"/>
</dbReference>
<feature type="chain" id="PRO_0000241355" description="Large ribosomal subunit protein uL3">
    <location>
        <begin position="1"/>
        <end position="212"/>
    </location>
</feature>
<feature type="region of interest" description="Disordered" evidence="2">
    <location>
        <begin position="119"/>
        <end position="147"/>
    </location>
</feature>
<name>RL3_LACAC</name>
<protein>
    <recommendedName>
        <fullName evidence="1">Large ribosomal subunit protein uL3</fullName>
    </recommendedName>
    <alternativeName>
        <fullName evidence="3">50S ribosomal protein L3</fullName>
    </alternativeName>
</protein>
<evidence type="ECO:0000255" key="1">
    <source>
        <dbReference type="HAMAP-Rule" id="MF_01325"/>
    </source>
</evidence>
<evidence type="ECO:0000256" key="2">
    <source>
        <dbReference type="SAM" id="MobiDB-lite"/>
    </source>
</evidence>
<evidence type="ECO:0000305" key="3"/>
<reference key="1">
    <citation type="journal article" date="2005" name="Proc. Natl. Acad. Sci. U.S.A.">
        <title>Complete genome sequence of the probiotic lactic acid bacterium Lactobacillus acidophilus NCFM.</title>
        <authorList>
            <person name="Altermann E."/>
            <person name="Russell W.M."/>
            <person name="Azcarate-Peril M.A."/>
            <person name="Barrangou R."/>
            <person name="Buck B.L."/>
            <person name="McAuliffe O."/>
            <person name="Souther N."/>
            <person name="Dobson A."/>
            <person name="Duong T."/>
            <person name="Callanan M."/>
            <person name="Lick S."/>
            <person name="Hamrick A."/>
            <person name="Cano R."/>
            <person name="Klaenhammer T.R."/>
        </authorList>
    </citation>
    <scope>NUCLEOTIDE SEQUENCE [LARGE SCALE GENOMIC DNA]</scope>
    <source>
        <strain>ATCC 700396 / NCK56 / N2 / NCFM</strain>
    </source>
</reference>